<feature type="chain" id="PRO_1000200153" description="UPF0102 protein Msil_0293">
    <location>
        <begin position="1"/>
        <end position="124"/>
    </location>
</feature>
<keyword id="KW-1185">Reference proteome</keyword>
<accession>B8EP34</accession>
<proteinExistence type="inferred from homology"/>
<reference key="1">
    <citation type="journal article" date="2010" name="J. Bacteriol.">
        <title>Complete genome sequence of the aerobic facultative methanotroph Methylocella silvestris BL2.</title>
        <authorList>
            <person name="Chen Y."/>
            <person name="Crombie A."/>
            <person name="Rahman M.T."/>
            <person name="Dedysh S.N."/>
            <person name="Liesack W."/>
            <person name="Stott M.B."/>
            <person name="Alam M."/>
            <person name="Theisen A.R."/>
            <person name="Murrell J.C."/>
            <person name="Dunfield P.F."/>
        </authorList>
    </citation>
    <scope>NUCLEOTIDE SEQUENCE [LARGE SCALE GENOMIC DNA]</scope>
    <source>
        <strain>DSM 15510 / CIP 108128 / LMG 27833 / NCIMB 13906 / BL2</strain>
    </source>
</reference>
<protein>
    <recommendedName>
        <fullName evidence="1">UPF0102 protein Msil_0293</fullName>
    </recommendedName>
</protein>
<gene>
    <name type="ordered locus">Msil_0293</name>
</gene>
<comment type="similarity">
    <text evidence="1">Belongs to the UPF0102 family.</text>
</comment>
<evidence type="ECO:0000255" key="1">
    <source>
        <dbReference type="HAMAP-Rule" id="MF_00048"/>
    </source>
</evidence>
<dbReference type="EMBL" id="CP001280">
    <property type="protein sequence ID" value="ACK49272.1"/>
    <property type="molecule type" value="Genomic_DNA"/>
</dbReference>
<dbReference type="RefSeq" id="WP_012589342.1">
    <property type="nucleotide sequence ID" value="NC_011666.1"/>
</dbReference>
<dbReference type="SMR" id="B8EP34"/>
<dbReference type="STRING" id="395965.Msil_0293"/>
<dbReference type="KEGG" id="msl:Msil_0293"/>
<dbReference type="eggNOG" id="COG0792">
    <property type="taxonomic scope" value="Bacteria"/>
</dbReference>
<dbReference type="HOGENOM" id="CLU_115353_0_2_5"/>
<dbReference type="OrthoDB" id="9812968at2"/>
<dbReference type="Proteomes" id="UP000002257">
    <property type="component" value="Chromosome"/>
</dbReference>
<dbReference type="GO" id="GO:0003676">
    <property type="term" value="F:nucleic acid binding"/>
    <property type="evidence" value="ECO:0007669"/>
    <property type="project" value="InterPro"/>
</dbReference>
<dbReference type="Gene3D" id="3.40.1350.10">
    <property type="match status" value="1"/>
</dbReference>
<dbReference type="HAMAP" id="MF_00048">
    <property type="entry name" value="UPF0102"/>
    <property type="match status" value="1"/>
</dbReference>
<dbReference type="InterPro" id="IPR011335">
    <property type="entry name" value="Restrct_endonuc-II-like"/>
</dbReference>
<dbReference type="InterPro" id="IPR011856">
    <property type="entry name" value="tRNA_endonuc-like_dom_sf"/>
</dbReference>
<dbReference type="InterPro" id="IPR003509">
    <property type="entry name" value="UPF0102_YraN-like"/>
</dbReference>
<dbReference type="NCBIfam" id="NF009151">
    <property type="entry name" value="PRK12497.1-5"/>
    <property type="match status" value="1"/>
</dbReference>
<dbReference type="PANTHER" id="PTHR34039">
    <property type="entry name" value="UPF0102 PROTEIN YRAN"/>
    <property type="match status" value="1"/>
</dbReference>
<dbReference type="PANTHER" id="PTHR34039:SF1">
    <property type="entry name" value="UPF0102 PROTEIN YRAN"/>
    <property type="match status" value="1"/>
</dbReference>
<dbReference type="Pfam" id="PF02021">
    <property type="entry name" value="UPF0102"/>
    <property type="match status" value="1"/>
</dbReference>
<dbReference type="SUPFAM" id="SSF52980">
    <property type="entry name" value="Restriction endonuclease-like"/>
    <property type="match status" value="1"/>
</dbReference>
<name>Y293_METSB</name>
<organism>
    <name type="scientific">Methylocella silvestris (strain DSM 15510 / CIP 108128 / LMG 27833 / NCIMB 13906 / BL2)</name>
    <dbReference type="NCBI Taxonomy" id="395965"/>
    <lineage>
        <taxon>Bacteria</taxon>
        <taxon>Pseudomonadati</taxon>
        <taxon>Pseudomonadota</taxon>
        <taxon>Alphaproteobacteria</taxon>
        <taxon>Hyphomicrobiales</taxon>
        <taxon>Beijerinckiaceae</taxon>
        <taxon>Methylocella</taxon>
    </lineage>
</organism>
<sequence length="124" mass="14059">MRDADDRRAALWQGRMAERAAILALRLKRYAILERGYRIHGGEIDIIARRGDTIAFVEVKARPTMDGALQSITPQKRRRICRAARVWLASHPYAAAMTLRGDAVFVAPWRWPHHVAAAVELDFG</sequence>